<sequence>MKLSRRSFMKANAVAAAAAAAGLSVPGVARAVVGQQEAIKWDKAPCRFCGTGCGVLVGTQQGRVVACQGDPDAPVNRGLNCIKGYFLPKIMYGKDRLTQPMLRMKDGSYHKDGEFTPVSWEQAFDVMEEKFKTSLKEKGPEAIGMFGSGQWTIWEGYAAAKLFKAGFRSNNIDPNARHCMASAVVGFMRTFGMDEPMGCYDDIEQADAFVLWGSNMAEMHPILWSRITNRRLSDPNVKVAVLSTFQHRSFELADNGIVFTPQSDLVILNYIANYIIQNNAVNQDFFTKHVNLRKGATDIGYGLRPTHPLEKAAKNPGSDASEPMSFDEYKAFVAEYTLDKTAEMTGVPKDQLEQLAQLYADPNKRVISYWTMGFNQHTRGVWANNLVYNLHLLTGKISQPGCGPFSLTGQPSACGTAREVGTFSHRLPADMVVTNEKHRDICEKHWQIPAGTIPAKVGLHAVAQDRALKDGKLNVYWVMCNNNMQAGPNINEDRMPGWRDPRNFIIVSDPYPTVSALSADLILPTAMWVEKEGAYGNAERRTQFWRQQIKAPGEAKSDLWQLVQFSRRFKTEEVWPEALLAQKPELRGKTLYDVLFATPAVSKFPLSELKEDQLNDESRELGFYLQKGLFEEYAWFGRGHGHDLAPFDDYHNARGLRWPVVEGKETQWRYSEGNDPYVKAGEGYKFYGKPDGKAVIFALPFEPAAESPDNEYDLWLSTGRVLEHWHTGSMTRRVPELHRAFPEAVVFIHPLDAKARDLRRGDKVKVSSRRGEVISIVETRGRNRPPQGLVYMPFFDAAQLVNNLTLDATDPLSKETDFKKCAVKLAKV</sequence>
<reference key="1">
    <citation type="journal article" date="2005" name="Nucleic Acids Res.">
        <title>The genome sequence of Salmonella enterica serovar Choleraesuis, a highly invasive and resistant zoonotic pathogen.</title>
        <authorList>
            <person name="Chiu C.-H."/>
            <person name="Tang P."/>
            <person name="Chu C."/>
            <person name="Hu S."/>
            <person name="Bao Q."/>
            <person name="Yu J."/>
            <person name="Chou Y.-Y."/>
            <person name="Wang H.-S."/>
            <person name="Lee Y.-S."/>
        </authorList>
    </citation>
    <scope>NUCLEOTIDE SEQUENCE [LARGE SCALE GENOMIC DNA]</scope>
    <source>
        <strain>SC-B67</strain>
    </source>
</reference>
<name>NAPA_SALCH</name>
<keyword id="KW-0004">4Fe-4S</keyword>
<keyword id="KW-0249">Electron transport</keyword>
<keyword id="KW-0408">Iron</keyword>
<keyword id="KW-0411">Iron-sulfur</keyword>
<keyword id="KW-0479">Metal-binding</keyword>
<keyword id="KW-0500">Molybdenum</keyword>
<keyword id="KW-0534">Nitrate assimilation</keyword>
<keyword id="KW-0560">Oxidoreductase</keyword>
<keyword id="KW-0574">Periplasm</keyword>
<keyword id="KW-0732">Signal</keyword>
<keyword id="KW-0813">Transport</keyword>
<organism>
    <name type="scientific">Salmonella choleraesuis (strain SC-B67)</name>
    <dbReference type="NCBI Taxonomy" id="321314"/>
    <lineage>
        <taxon>Bacteria</taxon>
        <taxon>Pseudomonadati</taxon>
        <taxon>Pseudomonadota</taxon>
        <taxon>Gammaproteobacteria</taxon>
        <taxon>Enterobacterales</taxon>
        <taxon>Enterobacteriaceae</taxon>
        <taxon>Salmonella</taxon>
    </lineage>
</organism>
<feature type="signal peptide" description="Tat-type signal" evidence="1">
    <location>
        <begin position="1"/>
        <end position="31"/>
    </location>
</feature>
<feature type="chain" id="PRO_0000045999" description="Periplasmic nitrate reductase" evidence="1">
    <location>
        <begin position="32"/>
        <end position="828"/>
    </location>
</feature>
<feature type="domain" description="4Fe-4S Mo/W bis-MGD-type" evidence="1">
    <location>
        <begin position="39"/>
        <end position="95"/>
    </location>
</feature>
<feature type="binding site" evidence="1">
    <location>
        <position position="46"/>
    </location>
    <ligand>
        <name>[4Fe-4S] cluster</name>
        <dbReference type="ChEBI" id="CHEBI:49883"/>
    </ligand>
</feature>
<feature type="binding site" evidence="1">
    <location>
        <position position="49"/>
    </location>
    <ligand>
        <name>[4Fe-4S] cluster</name>
        <dbReference type="ChEBI" id="CHEBI:49883"/>
    </ligand>
</feature>
<feature type="binding site" evidence="1">
    <location>
        <position position="53"/>
    </location>
    <ligand>
        <name>[4Fe-4S] cluster</name>
        <dbReference type="ChEBI" id="CHEBI:49883"/>
    </ligand>
</feature>
<feature type="binding site" evidence="1">
    <location>
        <position position="81"/>
    </location>
    <ligand>
        <name>[4Fe-4S] cluster</name>
        <dbReference type="ChEBI" id="CHEBI:49883"/>
    </ligand>
</feature>
<feature type="binding site" evidence="1">
    <location>
        <position position="83"/>
    </location>
    <ligand>
        <name>Mo-bis(molybdopterin guanine dinucleotide)</name>
        <dbReference type="ChEBI" id="CHEBI:60539"/>
    </ligand>
</feature>
<feature type="binding site" evidence="1">
    <location>
        <position position="150"/>
    </location>
    <ligand>
        <name>Mo-bis(molybdopterin guanine dinucleotide)</name>
        <dbReference type="ChEBI" id="CHEBI:60539"/>
    </ligand>
</feature>
<feature type="binding site" evidence="1">
    <location>
        <position position="175"/>
    </location>
    <ligand>
        <name>Mo-bis(molybdopterin guanine dinucleotide)</name>
        <dbReference type="ChEBI" id="CHEBI:60539"/>
    </ligand>
</feature>
<feature type="binding site" evidence="1">
    <location>
        <position position="179"/>
    </location>
    <ligand>
        <name>Mo-bis(molybdopterin guanine dinucleotide)</name>
        <dbReference type="ChEBI" id="CHEBI:60539"/>
    </ligand>
</feature>
<feature type="binding site" evidence="1">
    <location>
        <begin position="212"/>
        <end position="219"/>
    </location>
    <ligand>
        <name>Mo-bis(molybdopterin guanine dinucleotide)</name>
        <dbReference type="ChEBI" id="CHEBI:60539"/>
    </ligand>
</feature>
<feature type="binding site" evidence="1">
    <location>
        <begin position="243"/>
        <end position="247"/>
    </location>
    <ligand>
        <name>Mo-bis(molybdopterin guanine dinucleotide)</name>
        <dbReference type="ChEBI" id="CHEBI:60539"/>
    </ligand>
</feature>
<feature type="binding site" evidence="1">
    <location>
        <begin position="262"/>
        <end position="264"/>
    </location>
    <ligand>
        <name>Mo-bis(molybdopterin guanine dinucleotide)</name>
        <dbReference type="ChEBI" id="CHEBI:60539"/>
    </ligand>
</feature>
<feature type="binding site" evidence="1">
    <location>
        <position position="372"/>
    </location>
    <ligand>
        <name>Mo-bis(molybdopterin guanine dinucleotide)</name>
        <dbReference type="ChEBI" id="CHEBI:60539"/>
    </ligand>
</feature>
<feature type="binding site" evidence="1">
    <location>
        <position position="376"/>
    </location>
    <ligand>
        <name>Mo-bis(molybdopterin guanine dinucleotide)</name>
        <dbReference type="ChEBI" id="CHEBI:60539"/>
    </ligand>
</feature>
<feature type="binding site" evidence="1">
    <location>
        <position position="482"/>
    </location>
    <ligand>
        <name>Mo-bis(molybdopterin guanine dinucleotide)</name>
        <dbReference type="ChEBI" id="CHEBI:60539"/>
    </ligand>
</feature>
<feature type="binding site" evidence="1">
    <location>
        <begin position="508"/>
        <end position="509"/>
    </location>
    <ligand>
        <name>Mo-bis(molybdopterin guanine dinucleotide)</name>
        <dbReference type="ChEBI" id="CHEBI:60539"/>
    </ligand>
</feature>
<feature type="binding site" evidence="1">
    <location>
        <position position="531"/>
    </location>
    <ligand>
        <name>Mo-bis(molybdopterin guanine dinucleotide)</name>
        <dbReference type="ChEBI" id="CHEBI:60539"/>
    </ligand>
</feature>
<feature type="binding site" evidence="1">
    <location>
        <position position="558"/>
    </location>
    <ligand>
        <name>Mo-bis(molybdopterin guanine dinucleotide)</name>
        <dbReference type="ChEBI" id="CHEBI:60539"/>
    </ligand>
</feature>
<feature type="binding site" evidence="1">
    <location>
        <begin position="718"/>
        <end position="727"/>
    </location>
    <ligand>
        <name>Mo-bis(molybdopterin guanine dinucleotide)</name>
        <dbReference type="ChEBI" id="CHEBI:60539"/>
    </ligand>
</feature>
<feature type="binding site" evidence="1">
    <location>
        <position position="794"/>
    </location>
    <ligand>
        <name>substrate</name>
    </ligand>
</feature>
<feature type="binding site" evidence="1">
    <location>
        <position position="802"/>
    </location>
    <ligand>
        <name>Mo-bis(molybdopterin guanine dinucleotide)</name>
        <dbReference type="ChEBI" id="CHEBI:60539"/>
    </ligand>
</feature>
<feature type="binding site" evidence="1">
    <location>
        <position position="819"/>
    </location>
    <ligand>
        <name>Mo-bis(molybdopterin guanine dinucleotide)</name>
        <dbReference type="ChEBI" id="CHEBI:60539"/>
    </ligand>
</feature>
<gene>
    <name evidence="1" type="primary">napA</name>
    <name type="ordered locus">SCH_2264</name>
</gene>
<proteinExistence type="inferred from homology"/>
<accession>Q57M92</accession>
<protein>
    <recommendedName>
        <fullName evidence="1">Periplasmic nitrate reductase</fullName>
        <ecNumber evidence="1">1.9.6.1</ecNumber>
    </recommendedName>
</protein>
<dbReference type="EC" id="1.9.6.1" evidence="1"/>
<dbReference type="EMBL" id="AE017220">
    <property type="protein sequence ID" value="AAX66170.1"/>
    <property type="molecule type" value="Genomic_DNA"/>
</dbReference>
<dbReference type="RefSeq" id="WP_000778097.1">
    <property type="nucleotide sequence ID" value="NC_006905.1"/>
</dbReference>
<dbReference type="SMR" id="Q57M92"/>
<dbReference type="KEGG" id="sec:SCH_2264"/>
<dbReference type="HOGENOM" id="CLU_000422_13_4_6"/>
<dbReference type="Proteomes" id="UP000000538">
    <property type="component" value="Chromosome"/>
</dbReference>
<dbReference type="GO" id="GO:0016020">
    <property type="term" value="C:membrane"/>
    <property type="evidence" value="ECO:0007669"/>
    <property type="project" value="TreeGrafter"/>
</dbReference>
<dbReference type="GO" id="GO:0009325">
    <property type="term" value="C:nitrate reductase complex"/>
    <property type="evidence" value="ECO:0007669"/>
    <property type="project" value="TreeGrafter"/>
</dbReference>
<dbReference type="GO" id="GO:0042597">
    <property type="term" value="C:periplasmic space"/>
    <property type="evidence" value="ECO:0007669"/>
    <property type="project" value="UniProtKB-SubCell"/>
</dbReference>
<dbReference type="GO" id="GO:0051539">
    <property type="term" value="F:4 iron, 4 sulfur cluster binding"/>
    <property type="evidence" value="ECO:0007669"/>
    <property type="project" value="UniProtKB-KW"/>
</dbReference>
<dbReference type="GO" id="GO:0009055">
    <property type="term" value="F:electron transfer activity"/>
    <property type="evidence" value="ECO:0007669"/>
    <property type="project" value="UniProtKB-UniRule"/>
</dbReference>
<dbReference type="GO" id="GO:0005506">
    <property type="term" value="F:iron ion binding"/>
    <property type="evidence" value="ECO:0007669"/>
    <property type="project" value="UniProtKB-UniRule"/>
</dbReference>
<dbReference type="GO" id="GO:0030151">
    <property type="term" value="F:molybdenum ion binding"/>
    <property type="evidence" value="ECO:0007669"/>
    <property type="project" value="InterPro"/>
</dbReference>
<dbReference type="GO" id="GO:0043546">
    <property type="term" value="F:molybdopterin cofactor binding"/>
    <property type="evidence" value="ECO:0007669"/>
    <property type="project" value="InterPro"/>
</dbReference>
<dbReference type="GO" id="GO:0050140">
    <property type="term" value="F:nitrate reductase (cytochrome) activity"/>
    <property type="evidence" value="ECO:0007669"/>
    <property type="project" value="UniProtKB-EC"/>
</dbReference>
<dbReference type="GO" id="GO:0045333">
    <property type="term" value="P:cellular respiration"/>
    <property type="evidence" value="ECO:0007669"/>
    <property type="project" value="UniProtKB-ARBA"/>
</dbReference>
<dbReference type="GO" id="GO:0006777">
    <property type="term" value="P:Mo-molybdopterin cofactor biosynthetic process"/>
    <property type="evidence" value="ECO:0007669"/>
    <property type="project" value="UniProtKB-UniRule"/>
</dbReference>
<dbReference type="GO" id="GO:0042128">
    <property type="term" value="P:nitrate assimilation"/>
    <property type="evidence" value="ECO:0007669"/>
    <property type="project" value="UniProtKB-UniRule"/>
</dbReference>
<dbReference type="CDD" id="cd02791">
    <property type="entry name" value="MopB_CT_Nitrate-R-NapA-like"/>
    <property type="match status" value="1"/>
</dbReference>
<dbReference type="CDD" id="cd02754">
    <property type="entry name" value="MopB_Nitrate-R-NapA-like"/>
    <property type="match status" value="1"/>
</dbReference>
<dbReference type="FunFam" id="2.40.40.20:FF:000005">
    <property type="entry name" value="Periplasmic nitrate reductase"/>
    <property type="match status" value="1"/>
</dbReference>
<dbReference type="FunFam" id="3.40.228.10:FF:000001">
    <property type="entry name" value="Periplasmic nitrate reductase"/>
    <property type="match status" value="1"/>
</dbReference>
<dbReference type="Gene3D" id="2.40.40.20">
    <property type="match status" value="1"/>
</dbReference>
<dbReference type="Gene3D" id="3.30.200.210">
    <property type="match status" value="1"/>
</dbReference>
<dbReference type="Gene3D" id="3.40.50.740">
    <property type="match status" value="1"/>
</dbReference>
<dbReference type="Gene3D" id="3.40.228.10">
    <property type="entry name" value="Dimethylsulfoxide Reductase, domain 2"/>
    <property type="match status" value="1"/>
</dbReference>
<dbReference type="HAMAP" id="MF_01630">
    <property type="entry name" value="Nitrate_reduct_NapA"/>
    <property type="match status" value="1"/>
</dbReference>
<dbReference type="InterPro" id="IPR009010">
    <property type="entry name" value="Asp_de-COase-like_dom_sf"/>
</dbReference>
<dbReference type="InterPro" id="IPR041957">
    <property type="entry name" value="CT_Nitrate-R-NapA-like"/>
</dbReference>
<dbReference type="InterPro" id="IPR006657">
    <property type="entry name" value="MoPterin_dinucl-bd_dom"/>
</dbReference>
<dbReference type="InterPro" id="IPR006656">
    <property type="entry name" value="Mopterin_OxRdtase"/>
</dbReference>
<dbReference type="InterPro" id="IPR006963">
    <property type="entry name" value="Mopterin_OxRdtase_4Fe-4S_dom"/>
</dbReference>
<dbReference type="InterPro" id="IPR027467">
    <property type="entry name" value="MopterinOxRdtase_cofactor_BS"/>
</dbReference>
<dbReference type="InterPro" id="IPR010051">
    <property type="entry name" value="Periplasm_NO3_reductase_lsu"/>
</dbReference>
<dbReference type="InterPro" id="IPR050123">
    <property type="entry name" value="Prok_molybdopt-oxidoreductase"/>
</dbReference>
<dbReference type="InterPro" id="IPR006311">
    <property type="entry name" value="TAT_signal"/>
</dbReference>
<dbReference type="InterPro" id="IPR019546">
    <property type="entry name" value="TAT_signal_bac_arc"/>
</dbReference>
<dbReference type="NCBIfam" id="TIGR01706">
    <property type="entry name" value="NAPA"/>
    <property type="match status" value="1"/>
</dbReference>
<dbReference type="NCBIfam" id="NF010055">
    <property type="entry name" value="PRK13532.1"/>
    <property type="match status" value="1"/>
</dbReference>
<dbReference type="NCBIfam" id="TIGR01409">
    <property type="entry name" value="TAT_signal_seq"/>
    <property type="match status" value="1"/>
</dbReference>
<dbReference type="PANTHER" id="PTHR43105:SF11">
    <property type="entry name" value="PERIPLASMIC NITRATE REDUCTASE"/>
    <property type="match status" value="1"/>
</dbReference>
<dbReference type="PANTHER" id="PTHR43105">
    <property type="entry name" value="RESPIRATORY NITRATE REDUCTASE"/>
    <property type="match status" value="1"/>
</dbReference>
<dbReference type="Pfam" id="PF04879">
    <property type="entry name" value="Molybdop_Fe4S4"/>
    <property type="match status" value="1"/>
</dbReference>
<dbReference type="Pfam" id="PF00384">
    <property type="entry name" value="Molybdopterin"/>
    <property type="match status" value="1"/>
</dbReference>
<dbReference type="Pfam" id="PF01568">
    <property type="entry name" value="Molydop_binding"/>
    <property type="match status" value="1"/>
</dbReference>
<dbReference type="SMART" id="SM00926">
    <property type="entry name" value="Molybdop_Fe4S4"/>
    <property type="match status" value="1"/>
</dbReference>
<dbReference type="SUPFAM" id="SSF50692">
    <property type="entry name" value="ADC-like"/>
    <property type="match status" value="1"/>
</dbReference>
<dbReference type="SUPFAM" id="SSF53706">
    <property type="entry name" value="Formate dehydrogenase/DMSO reductase, domains 1-3"/>
    <property type="match status" value="1"/>
</dbReference>
<dbReference type="PROSITE" id="PS51669">
    <property type="entry name" value="4FE4S_MOW_BIS_MGD"/>
    <property type="match status" value="1"/>
</dbReference>
<dbReference type="PROSITE" id="PS00551">
    <property type="entry name" value="MOLYBDOPTERIN_PROK_1"/>
    <property type="match status" value="1"/>
</dbReference>
<dbReference type="PROSITE" id="PS51318">
    <property type="entry name" value="TAT"/>
    <property type="match status" value="1"/>
</dbReference>
<evidence type="ECO:0000255" key="1">
    <source>
        <dbReference type="HAMAP-Rule" id="MF_01630"/>
    </source>
</evidence>
<comment type="function">
    <text evidence="1">Catalytic subunit of the periplasmic nitrate reductase complex NapAB. Receives electrons from NapB and catalyzes the reduction of nitrate to nitrite.</text>
</comment>
<comment type="catalytic activity">
    <reaction evidence="1">
        <text>2 Fe(II)-[cytochrome] + nitrate + 2 H(+) = 2 Fe(III)-[cytochrome] + nitrite + H2O</text>
        <dbReference type="Rhea" id="RHEA:12909"/>
        <dbReference type="Rhea" id="RHEA-COMP:11777"/>
        <dbReference type="Rhea" id="RHEA-COMP:11778"/>
        <dbReference type="ChEBI" id="CHEBI:15377"/>
        <dbReference type="ChEBI" id="CHEBI:15378"/>
        <dbReference type="ChEBI" id="CHEBI:16301"/>
        <dbReference type="ChEBI" id="CHEBI:17632"/>
        <dbReference type="ChEBI" id="CHEBI:29033"/>
        <dbReference type="ChEBI" id="CHEBI:29034"/>
        <dbReference type="EC" id="1.9.6.1"/>
    </reaction>
</comment>
<comment type="cofactor">
    <cofactor evidence="1">
        <name>[4Fe-4S] cluster</name>
        <dbReference type="ChEBI" id="CHEBI:49883"/>
    </cofactor>
    <text evidence="1">Binds 1 [4Fe-4S] cluster.</text>
</comment>
<comment type="cofactor">
    <cofactor evidence="1">
        <name>Mo-bis(molybdopterin guanine dinucleotide)</name>
        <dbReference type="ChEBI" id="CHEBI:60539"/>
    </cofactor>
    <text evidence="1">Binds 1 molybdenum-bis(molybdopterin guanine dinucleotide) (Mo-bis-MGD) cofactor per subunit.</text>
</comment>
<comment type="subunit">
    <text evidence="1">Component of the periplasmic nitrate reductase NapAB complex composed of NapA and NapB.</text>
</comment>
<comment type="subcellular location">
    <subcellularLocation>
        <location evidence="1">Periplasm</location>
    </subcellularLocation>
</comment>
<comment type="PTM">
    <text evidence="1">Predicted to be exported by the Tat system. The position of the signal peptide cleavage has not been experimentally proven.</text>
</comment>
<comment type="similarity">
    <text evidence="1">Belongs to the prokaryotic molybdopterin-containing oxidoreductase family. NasA/NapA/NarB subfamily.</text>
</comment>